<comment type="function">
    <text evidence="1">This protein is located at the 30S-50S ribosomal subunit interface and may play a role in the structure and function of the aminoacyl-tRNA binding site.</text>
</comment>
<comment type="similarity">
    <text evidence="1">Belongs to the bacterial ribosomal protein bL19 family.</text>
</comment>
<keyword id="KW-0687">Ribonucleoprotein</keyword>
<keyword id="KW-0689">Ribosomal protein</keyword>
<evidence type="ECO:0000255" key="1">
    <source>
        <dbReference type="HAMAP-Rule" id="MF_00402"/>
    </source>
</evidence>
<evidence type="ECO:0000305" key="2"/>
<gene>
    <name evidence="1" type="primary">rplS</name>
    <name type="ordered locus">NGK_0223</name>
</gene>
<proteinExistence type="inferred from homology"/>
<dbReference type="EMBL" id="CP001050">
    <property type="protein sequence ID" value="ACF28919.1"/>
    <property type="molecule type" value="Genomic_DNA"/>
</dbReference>
<dbReference type="RefSeq" id="WP_002217809.1">
    <property type="nucleotide sequence ID" value="NC_011035.1"/>
</dbReference>
<dbReference type="SMR" id="B4RIW2"/>
<dbReference type="GeneID" id="86929750"/>
<dbReference type="KEGG" id="ngk:NGK_0223"/>
<dbReference type="HOGENOM" id="CLU_103507_2_1_4"/>
<dbReference type="Proteomes" id="UP000002564">
    <property type="component" value="Chromosome"/>
</dbReference>
<dbReference type="GO" id="GO:0022625">
    <property type="term" value="C:cytosolic large ribosomal subunit"/>
    <property type="evidence" value="ECO:0007669"/>
    <property type="project" value="TreeGrafter"/>
</dbReference>
<dbReference type="GO" id="GO:0003735">
    <property type="term" value="F:structural constituent of ribosome"/>
    <property type="evidence" value="ECO:0007669"/>
    <property type="project" value="InterPro"/>
</dbReference>
<dbReference type="GO" id="GO:0006412">
    <property type="term" value="P:translation"/>
    <property type="evidence" value="ECO:0007669"/>
    <property type="project" value="UniProtKB-UniRule"/>
</dbReference>
<dbReference type="FunFam" id="2.30.30.790:FF:000001">
    <property type="entry name" value="50S ribosomal protein L19"/>
    <property type="match status" value="1"/>
</dbReference>
<dbReference type="Gene3D" id="2.30.30.790">
    <property type="match status" value="1"/>
</dbReference>
<dbReference type="HAMAP" id="MF_00402">
    <property type="entry name" value="Ribosomal_bL19"/>
    <property type="match status" value="1"/>
</dbReference>
<dbReference type="InterPro" id="IPR001857">
    <property type="entry name" value="Ribosomal_bL19"/>
</dbReference>
<dbReference type="InterPro" id="IPR018257">
    <property type="entry name" value="Ribosomal_bL19_CS"/>
</dbReference>
<dbReference type="InterPro" id="IPR038657">
    <property type="entry name" value="Ribosomal_bL19_sf"/>
</dbReference>
<dbReference type="InterPro" id="IPR008991">
    <property type="entry name" value="Translation_prot_SH3-like_sf"/>
</dbReference>
<dbReference type="NCBIfam" id="TIGR01024">
    <property type="entry name" value="rplS_bact"/>
    <property type="match status" value="1"/>
</dbReference>
<dbReference type="PANTHER" id="PTHR15680:SF9">
    <property type="entry name" value="LARGE RIBOSOMAL SUBUNIT PROTEIN BL19M"/>
    <property type="match status" value="1"/>
</dbReference>
<dbReference type="PANTHER" id="PTHR15680">
    <property type="entry name" value="RIBOSOMAL PROTEIN L19"/>
    <property type="match status" value="1"/>
</dbReference>
<dbReference type="Pfam" id="PF01245">
    <property type="entry name" value="Ribosomal_L19"/>
    <property type="match status" value="1"/>
</dbReference>
<dbReference type="PIRSF" id="PIRSF002191">
    <property type="entry name" value="Ribosomal_L19"/>
    <property type="match status" value="1"/>
</dbReference>
<dbReference type="PRINTS" id="PR00061">
    <property type="entry name" value="RIBOSOMALL19"/>
</dbReference>
<dbReference type="SUPFAM" id="SSF50104">
    <property type="entry name" value="Translation proteins SH3-like domain"/>
    <property type="match status" value="1"/>
</dbReference>
<dbReference type="PROSITE" id="PS01015">
    <property type="entry name" value="RIBOSOMAL_L19"/>
    <property type="match status" value="1"/>
</dbReference>
<sequence length="121" mass="13768">MNLIQQLEQEEIARLNKEIPEFAPGDTVVVSVRVVEGTRSRLQAYEGVVIARRNRGLNSNFIVRKISSGEGVERTFQLYSPTVEKIEVKRRGDVRRAKLYYLRGLTGKAARIKEKLPARKG</sequence>
<name>RL19_NEIG2</name>
<accession>B4RIW2</accession>
<organism>
    <name type="scientific">Neisseria gonorrhoeae (strain NCCP11945)</name>
    <dbReference type="NCBI Taxonomy" id="521006"/>
    <lineage>
        <taxon>Bacteria</taxon>
        <taxon>Pseudomonadati</taxon>
        <taxon>Pseudomonadota</taxon>
        <taxon>Betaproteobacteria</taxon>
        <taxon>Neisseriales</taxon>
        <taxon>Neisseriaceae</taxon>
        <taxon>Neisseria</taxon>
    </lineage>
</organism>
<feature type="chain" id="PRO_1000123347" description="Large ribosomal subunit protein bL19">
    <location>
        <begin position="1"/>
        <end position="121"/>
    </location>
</feature>
<protein>
    <recommendedName>
        <fullName evidence="1">Large ribosomal subunit protein bL19</fullName>
    </recommendedName>
    <alternativeName>
        <fullName evidence="2">50S ribosomal protein L19</fullName>
    </alternativeName>
</protein>
<reference key="1">
    <citation type="journal article" date="2008" name="J. Bacteriol.">
        <title>Complete genome sequence of Neisseria gonorrhoeae NCCP11945.</title>
        <authorList>
            <person name="Chung G.T."/>
            <person name="Yoo J.S."/>
            <person name="Oh H.B."/>
            <person name="Lee Y.S."/>
            <person name="Cha S.H."/>
            <person name="Kim S.J."/>
            <person name="Yoo C.K."/>
        </authorList>
    </citation>
    <scope>NUCLEOTIDE SEQUENCE [LARGE SCALE GENOMIC DNA]</scope>
    <source>
        <strain>NCCP11945</strain>
    </source>
</reference>